<organism>
    <name type="scientific">Bunodosoma capense</name>
    <name type="common">Knobbly sea anemone</name>
    <name type="synonym">Actinia capensis</name>
    <dbReference type="NCBI Taxonomy" id="2022720"/>
    <lineage>
        <taxon>Eukaryota</taxon>
        <taxon>Metazoa</taxon>
        <taxon>Cnidaria</taxon>
        <taxon>Anthozoa</taxon>
        <taxon>Hexacorallia</taxon>
        <taxon>Actiniaria</taxon>
        <taxon>Actiniidae</taxon>
        <taxon>Bunodosoma</taxon>
    </lineage>
</organism>
<comment type="function">
    <text evidence="2 6">Binds specifically to voltage-gated sodium channels (Nav), thereby delaying their inactivation during signal transduction (PubMed:31330191). Thus it strongly stimulates mammalian cardiac muscle contraction (By similarity).</text>
</comment>
<comment type="subcellular location">
    <subcellularLocation>
        <location evidence="3">Secreted</location>
    </subcellularLocation>
    <subcellularLocation>
        <location evidence="2">Nematocyst</location>
    </subcellularLocation>
</comment>
<comment type="mass spectrometry"/>
<comment type="similarity">
    <text evidence="5">Belongs to the sea anemone sodium channel inhibitory toxin family. Type I subfamily.</text>
</comment>
<dbReference type="SMR" id="P0DTR3"/>
<dbReference type="GO" id="GO:0005576">
    <property type="term" value="C:extracellular region"/>
    <property type="evidence" value="ECO:0007669"/>
    <property type="project" value="UniProtKB-SubCell"/>
</dbReference>
<dbReference type="GO" id="GO:0042151">
    <property type="term" value="C:nematocyst"/>
    <property type="evidence" value="ECO:0007669"/>
    <property type="project" value="UniProtKB-SubCell"/>
</dbReference>
<dbReference type="GO" id="GO:0017080">
    <property type="term" value="F:sodium channel regulator activity"/>
    <property type="evidence" value="ECO:0007669"/>
    <property type="project" value="UniProtKB-KW"/>
</dbReference>
<dbReference type="GO" id="GO:0090729">
    <property type="term" value="F:toxin activity"/>
    <property type="evidence" value="ECO:0007669"/>
    <property type="project" value="UniProtKB-KW"/>
</dbReference>
<dbReference type="GO" id="GO:0009966">
    <property type="term" value="P:regulation of signal transduction"/>
    <property type="evidence" value="ECO:0007669"/>
    <property type="project" value="InterPro"/>
</dbReference>
<dbReference type="Gene3D" id="2.20.20.10">
    <property type="entry name" value="Anthopleurin-A"/>
    <property type="match status" value="1"/>
</dbReference>
<dbReference type="InterPro" id="IPR000693">
    <property type="entry name" value="Anenome_toxin"/>
</dbReference>
<dbReference type="InterPro" id="IPR023355">
    <property type="entry name" value="Myo_ane_neurotoxin_sf"/>
</dbReference>
<dbReference type="Pfam" id="PF00706">
    <property type="entry name" value="Toxin_4"/>
    <property type="match status" value="1"/>
</dbReference>
<dbReference type="PIRSF" id="PIRSF001905">
    <property type="entry name" value="Anenome_toxin"/>
    <property type="match status" value="1"/>
</dbReference>
<dbReference type="SUPFAM" id="SSF57392">
    <property type="entry name" value="Defensin-like"/>
    <property type="match status" value="1"/>
</dbReference>
<protein>
    <recommendedName>
        <fullName evidence="5">Delta-actitoxin-Bca1a</fullName>
        <shortName evidence="4">Delta-AITX-Bca1a</shortName>
    </recommendedName>
</protein>
<keyword id="KW-0903">Direct protein sequencing</keyword>
<keyword id="KW-1015">Disulfide bond</keyword>
<keyword id="KW-0872">Ion channel impairing toxin</keyword>
<keyword id="KW-0166">Nematocyst</keyword>
<keyword id="KW-0528">Neurotoxin</keyword>
<keyword id="KW-0964">Secreted</keyword>
<keyword id="KW-0800">Toxin</keyword>
<keyword id="KW-0738">Voltage-gated sodium channel impairing toxin</keyword>
<feature type="chain" id="PRO_0000448543" description="Delta-actitoxin-Bca1a" evidence="3">
    <location>
        <begin position="1"/>
        <end position="43"/>
    </location>
</feature>
<feature type="disulfide bond" evidence="1">
    <location>
        <begin position="1"/>
        <end position="41"/>
    </location>
</feature>
<feature type="disulfide bond" evidence="1">
    <location>
        <begin position="3"/>
        <end position="31"/>
    </location>
</feature>
<feature type="disulfide bond" evidence="1">
    <location>
        <begin position="24"/>
        <end position="42"/>
    </location>
</feature>
<sequence>CLCNSDGPSVRGNTLSGILWLAGCPSGWHNCKKHKPTIGWCCK</sequence>
<proteinExistence type="evidence at protein level"/>
<name>NA11_BUNCP</name>
<accession>P0DTR3</accession>
<reference key="1">
    <citation type="journal article" date="2019" name="Toxicon">
        <title>Purification and biochemical characterisation of a putative sodium channel agonist secreted from the South African Knobbly sea anemone Bunodosoma capense.</title>
        <authorList>
            <person name="van Losenoord W."/>
            <person name="Krause J."/>
            <person name="Parker-Nance S."/>
            <person name="Krause R."/>
            <person name="Stoychev S."/>
            <person name="Frost C.L."/>
        </authorList>
    </citation>
    <scope>PROTEIN SEQUENCE</scope>
    <scope>MASS SPECTROMETRY</scope>
    <scope>SUBCELLULAR LOCATION</scope>
</reference>
<evidence type="ECO:0000250" key="1">
    <source>
        <dbReference type="UniProtKB" id="P01528"/>
    </source>
</evidence>
<evidence type="ECO:0000250" key="2">
    <source>
        <dbReference type="UniProtKB" id="P01529"/>
    </source>
</evidence>
<evidence type="ECO:0000269" key="3">
    <source>
    </source>
</evidence>
<evidence type="ECO:0000303" key="4">
    <source>
    </source>
</evidence>
<evidence type="ECO:0000305" key="5"/>
<evidence type="ECO:0000305" key="6">
    <source>
    </source>
</evidence>